<dbReference type="EMBL" id="Z38059">
    <property type="protein sequence ID" value="CAA86132.1"/>
    <property type="molecule type" value="Genomic_DNA"/>
</dbReference>
<dbReference type="EMBL" id="AY692933">
    <property type="protein sequence ID" value="AAT92952.1"/>
    <property type="molecule type" value="Genomic_DNA"/>
</dbReference>
<dbReference type="EMBL" id="BK006942">
    <property type="protein sequence ID" value="DAA08407.1"/>
    <property type="molecule type" value="Genomic_DNA"/>
</dbReference>
<dbReference type="PIR" id="S48388">
    <property type="entry name" value="S48388"/>
</dbReference>
<dbReference type="RefSeq" id="NP_012120.1">
    <property type="nucleotide sequence ID" value="NM_001179494.1"/>
</dbReference>
<dbReference type="PDB" id="3VXW">
    <property type="method" value="X-ray"/>
    <property type="resolution" value="3.00 A"/>
    <property type="chains" value="B=85-90"/>
</dbReference>
<dbReference type="PDB" id="5WLP">
    <property type="method" value="NMR"/>
    <property type="chains" value="A=200-341"/>
</dbReference>
<dbReference type="PDBsum" id="3VXW"/>
<dbReference type="PDBsum" id="5WLP"/>
<dbReference type="SMR" id="P40458"/>
<dbReference type="BioGRID" id="34846">
    <property type="interactions" value="251"/>
</dbReference>
<dbReference type="FunCoup" id="P40458">
    <property type="interactions" value="88"/>
</dbReference>
<dbReference type="IntAct" id="P40458">
    <property type="interactions" value="6"/>
</dbReference>
<dbReference type="MINT" id="P40458"/>
<dbReference type="STRING" id="4932.YIL146C"/>
<dbReference type="iPTMnet" id="P40458"/>
<dbReference type="PaxDb" id="4932-YIL146C"/>
<dbReference type="PeptideAtlas" id="P40458"/>
<dbReference type="DNASU" id="854660"/>
<dbReference type="EnsemblFungi" id="YIL146C_mRNA">
    <property type="protein sequence ID" value="YIL146C"/>
    <property type="gene ID" value="YIL146C"/>
</dbReference>
<dbReference type="GeneID" id="854660"/>
<dbReference type="KEGG" id="sce:YIL146C"/>
<dbReference type="AGR" id="SGD:S000001408"/>
<dbReference type="SGD" id="S000001408">
    <property type="gene designation" value="ATG32"/>
</dbReference>
<dbReference type="VEuPathDB" id="FungiDB:YIL146C"/>
<dbReference type="eggNOG" id="ENOG502QY5V">
    <property type="taxonomic scope" value="Eukaryota"/>
</dbReference>
<dbReference type="HOGENOM" id="CLU_039418_0_0_1"/>
<dbReference type="InParanoid" id="P40458"/>
<dbReference type="OMA" id="IPICQPG"/>
<dbReference type="OrthoDB" id="4066282at2759"/>
<dbReference type="BioCyc" id="YEAST:G3O-31395-MONOMER"/>
<dbReference type="BioGRID-ORCS" id="854660">
    <property type="hits" value="0 hits in 10 CRISPR screens"/>
</dbReference>
<dbReference type="EvolutionaryTrace" id="P40458"/>
<dbReference type="PRO" id="PR:P40458"/>
<dbReference type="Proteomes" id="UP000002311">
    <property type="component" value="Chromosome IX"/>
</dbReference>
<dbReference type="RNAct" id="P40458">
    <property type="molecule type" value="protein"/>
</dbReference>
<dbReference type="GO" id="GO:0005741">
    <property type="term" value="C:mitochondrial outer membrane"/>
    <property type="evidence" value="ECO:0000314"/>
    <property type="project" value="SGD"/>
</dbReference>
<dbReference type="GO" id="GO:0005739">
    <property type="term" value="C:mitochondrion"/>
    <property type="evidence" value="ECO:0000314"/>
    <property type="project" value="SGD"/>
</dbReference>
<dbReference type="GO" id="GO:0034045">
    <property type="term" value="C:phagophore assembly site membrane"/>
    <property type="evidence" value="ECO:0007669"/>
    <property type="project" value="UniProtKB-SubCell"/>
</dbReference>
<dbReference type="GO" id="GO:0005774">
    <property type="term" value="C:vacuolar membrane"/>
    <property type="evidence" value="ECO:0007669"/>
    <property type="project" value="UniProtKB-SubCell"/>
</dbReference>
<dbReference type="GO" id="GO:0140580">
    <property type="term" value="F:mitochondrion autophagosome adaptor activity"/>
    <property type="evidence" value="ECO:0000315"/>
    <property type="project" value="SGD"/>
</dbReference>
<dbReference type="GO" id="GO:0000422">
    <property type="term" value="P:autophagy of mitochondrion"/>
    <property type="evidence" value="ECO:0000315"/>
    <property type="project" value="SGD"/>
</dbReference>
<dbReference type="GO" id="GO:0031930">
    <property type="term" value="P:mitochondria-nucleus signaling pathway"/>
    <property type="evidence" value="ECO:0000316"/>
    <property type="project" value="SGD"/>
</dbReference>
<dbReference type="CDD" id="cd19929">
    <property type="entry name" value="psREC_Atg32"/>
    <property type="match status" value="1"/>
</dbReference>
<accession>P40458</accession>
<accession>D6VVE1</accession>
<name>ATG32_YEAST</name>
<feature type="chain" id="PRO_0000086920" description="Autophagy-related protein 32">
    <location>
        <begin position="1"/>
        <end position="529"/>
    </location>
</feature>
<feature type="transmembrane region" description="Helical" evidence="1">
    <location>
        <begin position="390"/>
        <end position="414"/>
    </location>
</feature>
<feature type="region of interest" description="Disordered" evidence="2">
    <location>
        <begin position="1"/>
        <end position="41"/>
    </location>
</feature>
<feature type="region of interest" description="Disordered" evidence="2">
    <location>
        <begin position="345"/>
        <end position="381"/>
    </location>
</feature>
<feature type="compositionally biased region" description="Basic and acidic residues" evidence="2">
    <location>
        <begin position="1"/>
        <end position="11"/>
    </location>
</feature>
<feature type="compositionally biased region" description="Low complexity" evidence="2">
    <location>
        <begin position="12"/>
        <end position="24"/>
    </location>
</feature>
<feature type="compositionally biased region" description="Polar residues" evidence="2">
    <location>
        <begin position="25"/>
        <end position="34"/>
    </location>
</feature>
<feature type="compositionally biased region" description="Basic residues" evidence="2">
    <location>
        <begin position="370"/>
        <end position="381"/>
    </location>
</feature>
<feature type="modified residue" description="Phosphoserine" evidence="8">
    <location>
        <position position="114"/>
    </location>
</feature>
<feature type="modified residue" description="Phosphoserine" evidence="8">
    <location>
        <position position="119"/>
    </location>
</feature>
<feature type="mutagenesis site" description="Abolishes mitophagy and impairs interaction with ATG11." evidence="8">
    <original>S</original>
    <variation>A</variation>
    <variation>N</variation>
    <variation>G</variation>
    <variation>Y</variation>
    <location>
        <position position="114"/>
    </location>
</feature>
<feature type="mutagenesis site" description="Decreases mitophagy and impairs interaction with ATG11." evidence="8">
    <original>S</original>
    <variation>A</variation>
    <location>
        <position position="119"/>
    </location>
</feature>
<feature type="turn" evidence="15">
    <location>
        <begin position="208"/>
        <end position="210"/>
    </location>
</feature>
<feature type="strand" evidence="15">
    <location>
        <begin position="219"/>
        <end position="225"/>
    </location>
</feature>
<feature type="turn" evidence="15">
    <location>
        <begin position="226"/>
        <end position="229"/>
    </location>
</feature>
<feature type="helix" evidence="15">
    <location>
        <begin position="230"/>
        <end position="232"/>
    </location>
</feature>
<feature type="helix" evidence="15">
    <location>
        <begin position="235"/>
        <end position="238"/>
    </location>
</feature>
<feature type="turn" evidence="15">
    <location>
        <begin position="247"/>
        <end position="251"/>
    </location>
</feature>
<feature type="strand" evidence="15">
    <location>
        <begin position="255"/>
        <end position="261"/>
    </location>
</feature>
<feature type="helix" evidence="15">
    <location>
        <begin position="265"/>
        <end position="277"/>
    </location>
</feature>
<feature type="strand" evidence="15">
    <location>
        <begin position="280"/>
        <end position="283"/>
    </location>
</feature>
<feature type="strand" evidence="15">
    <location>
        <begin position="285"/>
        <end position="288"/>
    </location>
</feature>
<feature type="helix" evidence="15">
    <location>
        <begin position="293"/>
        <end position="299"/>
    </location>
</feature>
<feature type="helix" evidence="15">
    <location>
        <begin position="301"/>
        <end position="304"/>
    </location>
</feature>
<feature type="turn" evidence="15">
    <location>
        <begin position="305"/>
        <end position="307"/>
    </location>
</feature>
<feature type="strand" evidence="15">
    <location>
        <begin position="308"/>
        <end position="310"/>
    </location>
</feature>
<feature type="turn" evidence="15">
    <location>
        <begin position="321"/>
        <end position="323"/>
    </location>
</feature>
<feature type="helix" evidence="15">
    <location>
        <begin position="324"/>
        <end position="327"/>
    </location>
</feature>
<feature type="helix" evidence="15">
    <location>
        <begin position="329"/>
        <end position="338"/>
    </location>
</feature>
<evidence type="ECO:0000255" key="1"/>
<evidence type="ECO:0000256" key="2">
    <source>
        <dbReference type="SAM" id="MobiDB-lite"/>
    </source>
</evidence>
<evidence type="ECO:0000269" key="3">
    <source>
    </source>
</evidence>
<evidence type="ECO:0000269" key="4">
    <source>
    </source>
</evidence>
<evidence type="ECO:0000269" key="5">
    <source>
    </source>
</evidence>
<evidence type="ECO:0000269" key="6">
    <source>
    </source>
</evidence>
<evidence type="ECO:0000269" key="7">
    <source>
    </source>
</evidence>
<evidence type="ECO:0000269" key="8">
    <source>
    </source>
</evidence>
<evidence type="ECO:0000269" key="9">
    <source>
    </source>
</evidence>
<evidence type="ECO:0000269" key="10">
    <source>
    </source>
</evidence>
<evidence type="ECO:0000269" key="11">
    <source>
    </source>
</evidence>
<evidence type="ECO:0000269" key="12">
    <source>
    </source>
</evidence>
<evidence type="ECO:0000269" key="13">
    <source>
    </source>
</evidence>
<evidence type="ECO:0000305" key="14"/>
<evidence type="ECO:0007829" key="15">
    <source>
        <dbReference type="PDB" id="5WLP"/>
    </source>
</evidence>
<proteinExistence type="evidence at protein level"/>
<protein>
    <recommendedName>
        <fullName>Autophagy-related protein 32</fullName>
    </recommendedName>
    <alternativeName>
        <fullName>Extracellular mutant protein 37</fullName>
    </alternativeName>
</protein>
<comment type="function">
    <text evidence="3 4 5 6 7 9 10 11 12">Mitophagy-specific receptor that recruits the autophagic machinery to mitochondria and regulates selective degradation of mitochondria. Mitophagy contributes to regulate mitochondrial quantity and quality by eliminating the mitochondria to a basal level to fulfill cellular energy requirements and preventing excess ROS production. Recruits ATG11 to the surface of mitochondria. Also promotes autophagy-dependent peroxisome degradation.</text>
</comment>
<comment type="subunit">
    <text evidence="3 4 8 10 13">Interacts with ATG8 (PubMed:19619494, PubMed:21757540, PubMed:22308029). Interacts with ATG11; to recruit ATG11 to mitochondria (PubMed:19619494, PubMed:19619495, PubMed:21757540, PubMed:22308029, PubMed:38964378).</text>
</comment>
<comment type="interaction">
    <interactant intactId="EBI-25256">
        <id>P40458</id>
    </interactant>
    <interactant intactId="EBI-31977">
        <id>Q12527</id>
        <label>ATG11</label>
    </interactant>
    <organismsDiffer>false</organismsDiffer>
    <experiments>2</experiments>
</comment>
<comment type="interaction">
    <interactant intactId="EBI-25256">
        <id>P40458</id>
    </interactant>
    <interactant intactId="EBI-9533">
        <id>P15790</id>
        <label>CKA1</label>
    </interactant>
    <organismsDiffer>false</organismsDiffer>
    <experiments>2</experiments>
</comment>
<comment type="subcellular location">
    <subcellularLocation>
        <location>Mitochondrion outer membrane</location>
        <topology>Single-pass membrane protein</topology>
    </subcellularLocation>
    <subcellularLocation>
        <location>Vacuole membrane</location>
        <topology>Single-pass membrane protein</topology>
    </subcellularLocation>
    <subcellularLocation>
        <location>Preautophagosomal structure membrane</location>
        <topology>Single-pass membrane protein</topology>
    </subcellularLocation>
    <text>Is recruited to the preautophagosomal structure during mitophagy and imported into the vacuole along with mitochondria during starvation.</text>
</comment>
<comment type="PTM">
    <text evidence="8">Phosphorylation of Ser-114 and Ser-119 are critically important for mitophagy and for the ATG11-ATG32 interaction. Phosphorylation depends on both HOG1 and PBS2.</text>
</comment>
<comment type="similarity">
    <text evidence="14">Belongs to the ATG32 family.</text>
</comment>
<keyword id="KW-0002">3D-structure</keyword>
<keyword id="KW-0072">Autophagy</keyword>
<keyword id="KW-0472">Membrane</keyword>
<keyword id="KW-0496">Mitochondrion</keyword>
<keyword id="KW-1000">Mitochondrion outer membrane</keyword>
<keyword id="KW-0597">Phosphoprotein</keyword>
<keyword id="KW-1185">Reference proteome</keyword>
<keyword id="KW-0812">Transmembrane</keyword>
<keyword id="KW-1133">Transmembrane helix</keyword>
<keyword id="KW-0926">Vacuole</keyword>
<reference key="1">
    <citation type="journal article" date="1997" name="Nature">
        <title>The nucleotide sequence of Saccharomyces cerevisiae chromosome IX.</title>
        <authorList>
            <person name="Churcher C.M."/>
            <person name="Bowman S."/>
            <person name="Badcock K."/>
            <person name="Bankier A.T."/>
            <person name="Brown D."/>
            <person name="Chillingworth T."/>
            <person name="Connor R."/>
            <person name="Devlin K."/>
            <person name="Gentles S."/>
            <person name="Hamlin N."/>
            <person name="Harris D.E."/>
            <person name="Horsnell T."/>
            <person name="Hunt S."/>
            <person name="Jagels K."/>
            <person name="Jones M."/>
            <person name="Lye G."/>
            <person name="Moule S."/>
            <person name="Odell C."/>
            <person name="Pearson D."/>
            <person name="Rajandream M.A."/>
            <person name="Rice P."/>
            <person name="Rowley N."/>
            <person name="Skelton J."/>
            <person name="Smith V."/>
            <person name="Walsh S.V."/>
            <person name="Whitehead S."/>
            <person name="Barrell B.G."/>
        </authorList>
    </citation>
    <scope>NUCLEOTIDE SEQUENCE [LARGE SCALE GENOMIC DNA]</scope>
    <source>
        <strain>ATCC 204508 / S288c</strain>
    </source>
</reference>
<reference key="2">
    <citation type="journal article" date="2014" name="G3 (Bethesda)">
        <title>The reference genome sequence of Saccharomyces cerevisiae: Then and now.</title>
        <authorList>
            <person name="Engel S.R."/>
            <person name="Dietrich F.S."/>
            <person name="Fisk D.G."/>
            <person name="Binkley G."/>
            <person name="Balakrishnan R."/>
            <person name="Costanzo M.C."/>
            <person name="Dwight S.S."/>
            <person name="Hitz B.C."/>
            <person name="Karra K."/>
            <person name="Nash R.S."/>
            <person name="Weng S."/>
            <person name="Wong E.D."/>
            <person name="Lloyd P."/>
            <person name="Skrzypek M.S."/>
            <person name="Miyasato S.R."/>
            <person name="Simison M."/>
            <person name="Cherry J.M."/>
        </authorList>
    </citation>
    <scope>GENOME REANNOTATION</scope>
    <source>
        <strain>ATCC 204508 / S288c</strain>
    </source>
</reference>
<reference key="3">
    <citation type="journal article" date="2007" name="Genome Res.">
        <title>Approaching a complete repository of sequence-verified protein-encoding clones for Saccharomyces cerevisiae.</title>
        <authorList>
            <person name="Hu Y."/>
            <person name="Rolfs A."/>
            <person name="Bhullar B."/>
            <person name="Murthy T.V.S."/>
            <person name="Zhu C."/>
            <person name="Berger M.F."/>
            <person name="Camargo A.A."/>
            <person name="Kelley F."/>
            <person name="McCarron S."/>
            <person name="Jepson D."/>
            <person name="Richardson A."/>
            <person name="Raphael J."/>
            <person name="Moreira D."/>
            <person name="Taycher E."/>
            <person name="Zuo D."/>
            <person name="Mohr S."/>
            <person name="Kane M.F."/>
            <person name="Williamson J."/>
            <person name="Simpson A.J.G."/>
            <person name="Bulyk M.L."/>
            <person name="Harlow E."/>
            <person name="Marsischky G."/>
            <person name="Kolodner R.D."/>
            <person name="LaBaer J."/>
        </authorList>
    </citation>
    <scope>NUCLEOTIDE SEQUENCE [GENOMIC DNA]</scope>
    <source>
        <strain>ATCC 204508 / S288c</strain>
    </source>
</reference>
<reference key="4">
    <citation type="journal article" date="1997" name="Genetics">
        <title>Large scale identification of genes involved in cell surface biosynthesis and architecture in Saccharomyces cerevisiae.</title>
        <authorList>
            <person name="Lussier M."/>
            <person name="White A.-M."/>
            <person name="Sheraton J."/>
            <person name="di Paolo T."/>
            <person name="Treadwell J."/>
            <person name="Southard S.B."/>
            <person name="Horenstein C.I."/>
            <person name="Chen-Weiner J."/>
            <person name="Ram A.F.J."/>
            <person name="Kapteyn J.C."/>
            <person name="Roemer T.W."/>
            <person name="Vo D.H."/>
            <person name="Bondoc D.C."/>
            <person name="Hall J."/>
            <person name="Zhong W.-W."/>
            <person name="Sdicu A.-M."/>
            <person name="Davies J."/>
            <person name="Klis F.M."/>
            <person name="Robbins P.W."/>
            <person name="Bussey H."/>
        </authorList>
    </citation>
    <scope>IDENTIFICATION</scope>
</reference>
<reference key="5">
    <citation type="journal article" date="2009" name="Autophagy">
        <title>A landmark protein essential for mitophagy: Atg32 recruits the autophagic machinery to mitochondria.</title>
        <authorList>
            <person name="Okamoto K."/>
            <person name="Kondo-Okamoto N."/>
            <person name="Ohsumi Y."/>
        </authorList>
    </citation>
    <scope>FUNCTION</scope>
</reference>
<reference key="6">
    <citation type="journal article" date="2009" name="Dev. Cell">
        <title>Mitochondria-anchored receptor Atg32 mediates degradation of mitochondria via selective autophagy.</title>
        <authorList>
            <person name="Okamoto K."/>
            <person name="Kondo-Okamoto N."/>
            <person name="Ohsumi Y."/>
        </authorList>
    </citation>
    <scope>SUBCELLULAR LOCATION</scope>
    <scope>FUNCTION</scope>
    <scope>INTERACTION WITH ATG8 AND ATG11</scope>
</reference>
<reference key="7">
    <citation type="journal article" date="2009" name="Dev. Cell">
        <title>Atg32 is a mitochondrial protein that confers selectivity during mitophagy.</title>
        <authorList>
            <person name="Kanki T."/>
            <person name="Wang K."/>
            <person name="Cao Y."/>
            <person name="Baba M."/>
            <person name="Klionsky D.J."/>
        </authorList>
    </citation>
    <scope>SUBCELLULAR LOCATION</scope>
    <scope>FUNCTION</scope>
    <scope>INTERACTION WITH ATG11</scope>
</reference>
<reference key="8">
    <citation type="journal article" date="2009" name="Mol. Biol. Cell">
        <title>A genomic screen for yeast mutants defective in selective mitochondria autophagy.</title>
        <authorList>
            <person name="Kanki T."/>
            <person name="Wang K."/>
            <person name="Baba M."/>
            <person name="Bartholomew C.R."/>
            <person name="Lynch-Day M.A."/>
            <person name="Du Z."/>
            <person name="Geng J."/>
            <person name="Mao K."/>
            <person name="Yang Z."/>
            <person name="Yen W.L."/>
            <person name="Klionsky D.J."/>
        </authorList>
    </citation>
    <scope>FUNCTION</scope>
</reference>
<reference key="9">
    <citation type="journal article" date="2011" name="J. Cell Biol.">
        <title>Two MAPK-signaling pathways are required for mitophagy in Saccharomyces cerevisiae.</title>
        <authorList>
            <person name="Mao K."/>
            <person name="Wang K."/>
            <person name="Zhao M."/>
            <person name="Xu T."/>
            <person name="Klionsky D.J."/>
        </authorList>
    </citation>
    <scope>FUNCTION</scope>
    <scope>SUBCELLULAR LOCATION</scope>
</reference>
<reference key="10">
    <citation type="journal article" date="2011" name="Mol. Biol. Cell">
        <title>Phosphorylation of Serine 114 on Atg32 mediates mitophagy.</title>
        <authorList>
            <person name="Aoki Y."/>
            <person name="Kanki T."/>
            <person name="Hirota Y."/>
            <person name="Kurihara Y."/>
            <person name="Saigusa T."/>
            <person name="Uchiumi T."/>
            <person name="Kang D."/>
        </authorList>
    </citation>
    <scope>INTERACTION WITH ATG8 AND ATG11</scope>
    <scope>SUBCELLULAR LOCATION</scope>
    <scope>PHOSPHORYLATION AT SER-114 AND SER-119</scope>
    <scope>MUTAGENESIS OF SER-114 AND SER-119</scope>
</reference>
<reference key="11">
    <citation type="journal article" date="2012" name="Autophagy">
        <title>SNCA (alpha-synuclein)-induced toxicity in yeast cells is dependent on sirtuin 2 (Sir2)-mediated mitophagy.</title>
        <authorList>
            <person name="Sampaio-Marques B."/>
            <person name="Felgueiras C."/>
            <person name="Silva A."/>
            <person name="Rodrigues M."/>
            <person name="Tenreiro S."/>
            <person name="Franssens V."/>
            <person name="Reichert A.S."/>
            <person name="Outeiro T.F."/>
            <person name="Winderickx J."/>
            <person name="Ludovico P."/>
        </authorList>
    </citation>
    <scope>FUNCTION</scope>
</reference>
<reference key="12">
    <citation type="journal article" date="2012" name="EMBO J.">
        <title>Pex3-anchored Atg36 tags peroxisomes for degradation in Saccharomyces cerevisiae.</title>
        <authorList>
            <person name="Motley A.M."/>
            <person name="Nuttall J.M."/>
            <person name="Hettema E.H."/>
        </authorList>
    </citation>
    <scope>FUNCTION</scope>
</reference>
<reference key="13">
    <citation type="journal article" date="2012" name="J. Biol. Chem.">
        <title>Mitophagy plays an essential role in reducing mitochondrial production of reactive oxygen species and mutation of mitochondrial DNA by maintaining mitochondrial quantity and quality in yeast.</title>
        <authorList>
            <person name="Kurihara Y."/>
            <person name="Kanki T."/>
            <person name="Aoki Y."/>
            <person name="Hirota Y."/>
            <person name="Saigusa T."/>
            <person name="Uchiumi T."/>
            <person name="Kang D."/>
        </authorList>
    </citation>
    <scope>FUNCTION</scope>
</reference>
<reference key="14">
    <citation type="journal article" date="2024" name="Autophagy">
        <title>Prohibitins, Phb1 and Phb2, function as Atg8 receptors to support yeast mitophagy and also play a negative regulatory role in Atg32 processing.</title>
        <authorList>
            <person name="Garcia-Chavez D."/>
            <person name="Dominguez-Martin E."/>
            <person name="Kawasaki L."/>
            <person name="Ongay-Larios L."/>
            <person name="Ruelas-Ramirez H."/>
            <person name="Mendoza-Martinez A.E."/>
            <person name="Pardo J.P."/>
            <person name="Funes S."/>
            <person name="Coria R."/>
        </authorList>
    </citation>
    <scope>INTERACTION WITH ATG11</scope>
</reference>
<reference key="15">
    <citation type="journal article" date="2012" name="J. Biol. Chem.">
        <title>Autophagy-related protein 32 acts as autophagic degron and directly initiates mitophagy.</title>
        <authorList>
            <person name="Kondo-Okamoto N."/>
            <person name="Noda N.N."/>
            <person name="Suzuki S.W."/>
            <person name="Nakatogawa H."/>
            <person name="Takahashi I."/>
            <person name="Matsunami M."/>
            <person name="Hashimoto A."/>
            <person name="Inagaki F."/>
            <person name="Ohsumi Y."/>
            <person name="Okamoto K."/>
        </authorList>
    </citation>
    <scope>X-RAY CRYSTALLOGRAPHY (3.0 ANGSTROMS) OF 85-90</scope>
    <scope>FUNCTION</scope>
    <scope>INTERACTION WITH ATG8 AND ATG11</scope>
</reference>
<organism>
    <name type="scientific">Saccharomyces cerevisiae (strain ATCC 204508 / S288c)</name>
    <name type="common">Baker's yeast</name>
    <dbReference type="NCBI Taxonomy" id="559292"/>
    <lineage>
        <taxon>Eukaryota</taxon>
        <taxon>Fungi</taxon>
        <taxon>Dikarya</taxon>
        <taxon>Ascomycota</taxon>
        <taxon>Saccharomycotina</taxon>
        <taxon>Saccharomycetes</taxon>
        <taxon>Saccharomycetales</taxon>
        <taxon>Saccharomycetaceae</taxon>
        <taxon>Saccharomyces</taxon>
    </lineage>
</organism>
<gene>
    <name type="primary">ATG32</name>
    <name type="synonym">ECM17</name>
    <name type="ordered locus">YIL146C</name>
</gene>
<sequence length="529" mass="58969">MVLEYQQREGKGSSSKSMPPDSSSTTIHTCSEAQTGEDKGLLDPHLSVLELLSKTGHSPSPMGQNLVTSIDISGNHNVNDSISGSWQAIQPLDLGASFIPERCSSQTTNGSILSSSDTSEEEQELLQAPAADIINIIKQGQEGANVVSPSHPFKQLQKIISLPLPGKEKTPFNEQDDDGDEDEAFEEDSVTITKSLTSSTNSFVMPKLSLTQKNPVFRLLILGRTGSSFYQSIPKEYQSLFELPKYHDSATFPQYTGIVIIFQELREMVSLLNRIVQYSQGKPVIPICQPGQVIQVKNVLKSFLRNKLVKLLFPPVVVTNKRDLKKMFQRLQDLSLEYGEDVNEEDNDDEAIHTKSRSYCRNKKAENSKKKSPKSNKKPKRKKQKFFTSWFTWGISITIGISFGCCVTYFVTAAYEHQTVKSLSLRPSILASLLSLDSSSDTINTPATASPSSTEQFLWFDKGTLQINFHSDGFIMKSLTIIKETWGKMNTFVLHALSKPLKFLENLNKSSEFSIDESNRILALGYILL</sequence>